<evidence type="ECO:0000255" key="1"/>
<evidence type="ECO:0000269" key="2">
    <source>
    </source>
</evidence>
<evidence type="ECO:0000269" key="3">
    <source>
    </source>
</evidence>
<evidence type="ECO:0000303" key="4">
    <source>
    </source>
</evidence>
<evidence type="ECO:0000305" key="5"/>
<evidence type="ECO:0000305" key="6">
    <source>
    </source>
</evidence>
<evidence type="ECO:0000305" key="7">
    <source>
    </source>
</evidence>
<evidence type="ECO:0007829" key="8">
    <source>
        <dbReference type="PDB" id="7NB6"/>
    </source>
</evidence>
<comment type="function">
    <text evidence="3">Involved in the transport of the quorum-sensing signal autoinducer 2 (AI-2) (PubMed:16385049). Controls the transport of AI-2 either by enhancing its secretion or inhibiting its uptake and consequently represses biofilm formation and motility and affects the global gene expression in biofilms (PubMed:16385049).</text>
</comment>
<comment type="catalytic activity">
    <reaction evidence="6">
        <text>(2R,4S)-2-methyltetrahydrofuran-2,3,3,4-tetrol(in) = (2R,4S)-2-methyltetrahydrofuran-2,3,3,4-tetrol(out)</text>
        <dbReference type="Rhea" id="RHEA:35147"/>
        <dbReference type="ChEBI" id="CHEBI:44800"/>
    </reaction>
</comment>
<comment type="subcellular location">
    <subcellularLocation>
        <location evidence="2">Cell inner membrane</location>
        <topology evidence="1">Multi-pass membrane protein</topology>
    </subcellularLocation>
</comment>
<comment type="disruption phenotype">
    <text evidence="3">Cells have a decreased extracellular and increased intracellular concentration of AI-2. Deletion of tqsA results in a 7000-fold increase in biofilm thickness and 574-fold increase in biomass in flow cells. Deletion of tqsA increases cell motility by increasing transcription of flagellar genes. The tqsA deletion mutant shows higher resistance toward crystal violet, spectinomycin, streptomycin sulfate, 2,6-dichloroquinone-4-chloroimide, chloramphenicol and amoxicillin.</text>
</comment>
<comment type="similarity">
    <text evidence="7">Belongs to the autoinducer-2 exporter (AI-2E) (TC 2.A.86) family.</text>
</comment>
<organism>
    <name type="scientific">Escherichia coli (strain K12)</name>
    <dbReference type="NCBI Taxonomy" id="83333"/>
    <lineage>
        <taxon>Bacteria</taxon>
        <taxon>Pseudomonadati</taxon>
        <taxon>Pseudomonadota</taxon>
        <taxon>Gammaproteobacteria</taxon>
        <taxon>Enterobacterales</taxon>
        <taxon>Enterobacteriaceae</taxon>
        <taxon>Escherichia</taxon>
    </lineage>
</organism>
<reference key="1">
    <citation type="journal article" date="1996" name="DNA Res.">
        <title>A 570-kb DNA sequence of the Escherichia coli K-12 genome corresponding to the 28.0-40.1 min region on the linkage map.</title>
        <authorList>
            <person name="Aiba H."/>
            <person name="Baba T."/>
            <person name="Fujita K."/>
            <person name="Hayashi K."/>
            <person name="Inada T."/>
            <person name="Isono K."/>
            <person name="Itoh T."/>
            <person name="Kasai H."/>
            <person name="Kashimoto K."/>
            <person name="Kimura S."/>
            <person name="Kitakawa M."/>
            <person name="Kitagawa M."/>
            <person name="Makino K."/>
            <person name="Miki T."/>
            <person name="Mizobuchi K."/>
            <person name="Mori H."/>
            <person name="Mori T."/>
            <person name="Motomura K."/>
            <person name="Nakade S."/>
            <person name="Nakamura Y."/>
            <person name="Nashimoto H."/>
            <person name="Nishio Y."/>
            <person name="Oshima T."/>
            <person name="Saito N."/>
            <person name="Sampei G."/>
            <person name="Seki Y."/>
            <person name="Sivasundaram S."/>
            <person name="Tagami H."/>
            <person name="Takeda J."/>
            <person name="Takemoto K."/>
            <person name="Takeuchi Y."/>
            <person name="Wada C."/>
            <person name="Yamamoto Y."/>
            <person name="Horiuchi T."/>
        </authorList>
    </citation>
    <scope>NUCLEOTIDE SEQUENCE [LARGE SCALE GENOMIC DNA]</scope>
    <source>
        <strain>K12 / W3110 / ATCC 27325 / DSM 5911</strain>
    </source>
</reference>
<reference key="2">
    <citation type="journal article" date="1997" name="Science">
        <title>The complete genome sequence of Escherichia coli K-12.</title>
        <authorList>
            <person name="Blattner F.R."/>
            <person name="Plunkett G. III"/>
            <person name="Bloch C.A."/>
            <person name="Perna N.T."/>
            <person name="Burland V."/>
            <person name="Riley M."/>
            <person name="Collado-Vides J."/>
            <person name="Glasner J.D."/>
            <person name="Rode C.K."/>
            <person name="Mayhew G.F."/>
            <person name="Gregor J."/>
            <person name="Davis N.W."/>
            <person name="Kirkpatrick H.A."/>
            <person name="Goeden M.A."/>
            <person name="Rose D.J."/>
            <person name="Mau B."/>
            <person name="Shao Y."/>
        </authorList>
    </citation>
    <scope>NUCLEOTIDE SEQUENCE [LARGE SCALE GENOMIC DNA]</scope>
    <source>
        <strain>K12 / MG1655 / ATCC 47076</strain>
    </source>
</reference>
<reference key="3">
    <citation type="journal article" date="2006" name="Mol. Syst. Biol.">
        <title>Highly accurate genome sequences of Escherichia coli K-12 strains MG1655 and W3110.</title>
        <authorList>
            <person name="Hayashi K."/>
            <person name="Morooka N."/>
            <person name="Yamamoto Y."/>
            <person name="Fujita K."/>
            <person name="Isono K."/>
            <person name="Choi S."/>
            <person name="Ohtsubo E."/>
            <person name="Baba T."/>
            <person name="Wanner B.L."/>
            <person name="Mori H."/>
            <person name="Horiuchi T."/>
        </authorList>
    </citation>
    <scope>NUCLEOTIDE SEQUENCE [LARGE SCALE GENOMIC DNA]</scope>
    <source>
        <strain>K12 / W3110 / ATCC 27325 / DSM 5911</strain>
    </source>
</reference>
<reference key="4">
    <citation type="journal article" date="2005" name="Science">
        <title>Global topology analysis of the Escherichia coli inner membrane proteome.</title>
        <authorList>
            <person name="Daley D.O."/>
            <person name="Rapp M."/>
            <person name="Granseth E."/>
            <person name="Melen K."/>
            <person name="Drew D."/>
            <person name="von Heijne G."/>
        </authorList>
    </citation>
    <scope>TOPOLOGY [LARGE SCALE ANALYSIS]</scope>
    <scope>SUBCELLULAR LOCATION</scope>
    <source>
        <strain>K12 / MG1655 / ATCC 47076</strain>
    </source>
</reference>
<reference key="5">
    <citation type="journal article" date="2006" name="J. Bacteriol.">
        <title>YdgG (TqsA) controls biofilm formation in Escherichia coli K-12 through autoinducer 2 transport.</title>
        <authorList>
            <person name="Herzberg M."/>
            <person name="Kaye I.K."/>
            <person name="Peti W."/>
            <person name="Wood T.K."/>
        </authorList>
    </citation>
    <scope>FUNCTION IN AI-2 TRANSPORT AND BIOFILM FORMATION</scope>
    <scope>DISRUPTION PHENOTYPE</scope>
    <source>
        <strain>K12 / BW25113</strain>
    </source>
</reference>
<reference key="6">
    <citation type="journal article" date="2010" name="J. Mol. Microbiol. Biotechnol.">
        <title>The autoinducer-2 exporter superfamily.</title>
        <authorList>
            <person name="Rettner R.E."/>
            <person name="Saier M.H. Jr."/>
        </authorList>
    </citation>
    <scope>NOMENCLATURE</scope>
    <scope>PHYLOGENETIC ANALYSES</scope>
</reference>
<protein>
    <recommendedName>
        <fullName evidence="5">AI-2 transport protein TqsA</fullName>
    </recommendedName>
    <alternativeName>
        <fullName evidence="4">Transport of quorum-sensing signal protein</fullName>
    </alternativeName>
</protein>
<gene>
    <name evidence="4" type="primary">tqsA</name>
    <name type="synonym">ydgG</name>
    <name type="ordered locus">b1601</name>
    <name type="ordered locus">JW1593</name>
</gene>
<dbReference type="EMBL" id="U00096">
    <property type="protein sequence ID" value="AAC74673.1"/>
    <property type="molecule type" value="Genomic_DNA"/>
</dbReference>
<dbReference type="EMBL" id="AP009048">
    <property type="protein sequence ID" value="BAA15335.1"/>
    <property type="molecule type" value="Genomic_DNA"/>
</dbReference>
<dbReference type="PIR" id="C64916">
    <property type="entry name" value="C64916"/>
</dbReference>
<dbReference type="RefSeq" id="NP_416118.1">
    <property type="nucleotide sequence ID" value="NC_000913.3"/>
</dbReference>
<dbReference type="RefSeq" id="WP_001118241.1">
    <property type="nucleotide sequence ID" value="NZ_STEB01000003.1"/>
</dbReference>
<dbReference type="PDB" id="7NB6">
    <property type="method" value="EM"/>
    <property type="resolution" value="3.30 A"/>
    <property type="chains" value="A/B/C/D/E=1-344"/>
</dbReference>
<dbReference type="PDBsum" id="7NB6"/>
<dbReference type="EMDB" id="EMD-12256"/>
<dbReference type="SMR" id="P0AFS5"/>
<dbReference type="BioGRID" id="4260647">
    <property type="interactions" value="14"/>
</dbReference>
<dbReference type="FunCoup" id="P0AFS5">
    <property type="interactions" value="339"/>
</dbReference>
<dbReference type="STRING" id="511145.b1601"/>
<dbReference type="TCDB" id="2.A.86.1.4">
    <property type="family name" value="the autoinducer-2 exporter (ai-2e) family (formerly the perm family, tc #9,b,22)"/>
</dbReference>
<dbReference type="PaxDb" id="511145-b1601"/>
<dbReference type="EnsemblBacteria" id="AAC74673">
    <property type="protein sequence ID" value="AAC74673"/>
    <property type="gene ID" value="b1601"/>
</dbReference>
<dbReference type="GeneID" id="93775749"/>
<dbReference type="GeneID" id="946142"/>
<dbReference type="KEGG" id="ecj:JW1593"/>
<dbReference type="KEGG" id="eco:b1601"/>
<dbReference type="KEGG" id="ecoc:C3026_09220"/>
<dbReference type="PATRIC" id="fig|1411691.4.peg.661"/>
<dbReference type="EchoBASE" id="EB3687"/>
<dbReference type="eggNOG" id="COG0628">
    <property type="taxonomic scope" value="Bacteria"/>
</dbReference>
<dbReference type="HOGENOM" id="CLU_031275_0_3_6"/>
<dbReference type="InParanoid" id="P0AFS5"/>
<dbReference type="OMA" id="DQVIQPR"/>
<dbReference type="OrthoDB" id="9799225at2"/>
<dbReference type="PhylomeDB" id="P0AFS5"/>
<dbReference type="BioCyc" id="EcoCyc:G6859-MONOMER"/>
<dbReference type="BioCyc" id="MetaCyc:G6859-MONOMER"/>
<dbReference type="PRO" id="PR:P0AFS5"/>
<dbReference type="Proteomes" id="UP000000625">
    <property type="component" value="Chromosome"/>
</dbReference>
<dbReference type="GO" id="GO:0005886">
    <property type="term" value="C:plasma membrane"/>
    <property type="evidence" value="ECO:0000255"/>
    <property type="project" value="EcoCyc"/>
</dbReference>
<dbReference type="GO" id="GO:0015562">
    <property type="term" value="F:efflux transmembrane transporter activity"/>
    <property type="evidence" value="ECO:0000315"/>
    <property type="project" value="EcoCyc"/>
</dbReference>
<dbReference type="GO" id="GO:1905887">
    <property type="term" value="P:autoinducer AI-2 transmembrane transport"/>
    <property type="evidence" value="ECO:0000315"/>
    <property type="project" value="EcoCyc"/>
</dbReference>
<dbReference type="GO" id="GO:0009372">
    <property type="term" value="P:quorum sensing"/>
    <property type="evidence" value="ECO:0000315"/>
    <property type="project" value="EcoCyc"/>
</dbReference>
<dbReference type="GO" id="GO:0055085">
    <property type="term" value="P:transmembrane transport"/>
    <property type="evidence" value="ECO:0000318"/>
    <property type="project" value="GO_Central"/>
</dbReference>
<dbReference type="InterPro" id="IPR002549">
    <property type="entry name" value="AI-2E-like"/>
</dbReference>
<dbReference type="NCBIfam" id="NF008930">
    <property type="entry name" value="PRK12287.1"/>
    <property type="match status" value="1"/>
</dbReference>
<dbReference type="PANTHER" id="PTHR21716:SF64">
    <property type="entry name" value="AI-2 TRANSPORT PROTEIN TQSA"/>
    <property type="match status" value="1"/>
</dbReference>
<dbReference type="PANTHER" id="PTHR21716">
    <property type="entry name" value="TRANSMEMBRANE PROTEIN"/>
    <property type="match status" value="1"/>
</dbReference>
<dbReference type="Pfam" id="PF01594">
    <property type="entry name" value="AI-2E_transport"/>
    <property type="match status" value="1"/>
</dbReference>
<proteinExistence type="evidence at protein level"/>
<accession>P0AFS5</accession>
<accession>P77535</accession>
<feature type="chain" id="PRO_0000148297" description="AI-2 transport protein TqsA">
    <location>
        <begin position="1"/>
        <end position="344"/>
    </location>
</feature>
<feature type="topological domain" description="Cytoplasmic" evidence="5">
    <location>
        <begin position="1"/>
        <end position="4"/>
    </location>
</feature>
<feature type="transmembrane region" description="Helical" evidence="1">
    <location>
        <begin position="5"/>
        <end position="25"/>
    </location>
</feature>
<feature type="topological domain" description="Periplasmic" evidence="5">
    <location>
        <begin position="26"/>
        <end position="30"/>
    </location>
</feature>
<feature type="transmembrane region" description="Helical" evidence="1">
    <location>
        <begin position="31"/>
        <end position="51"/>
    </location>
</feature>
<feature type="topological domain" description="Cytoplasmic" evidence="5">
    <location>
        <begin position="52"/>
        <end position="61"/>
    </location>
</feature>
<feature type="transmembrane region" description="Helical" evidence="1">
    <location>
        <begin position="62"/>
        <end position="82"/>
    </location>
</feature>
<feature type="topological domain" description="Periplasmic" evidence="5">
    <location>
        <begin position="83"/>
        <end position="149"/>
    </location>
</feature>
<feature type="transmembrane region" description="Helical" evidence="1">
    <location>
        <begin position="150"/>
        <end position="170"/>
    </location>
</feature>
<feature type="topological domain" description="Cytoplasmic" evidence="5">
    <location>
        <begin position="171"/>
        <end position="196"/>
    </location>
</feature>
<feature type="transmembrane region" description="Helical" evidence="1">
    <location>
        <begin position="197"/>
        <end position="217"/>
    </location>
</feature>
<feature type="topological domain" description="Periplasmic" evidence="5">
    <location>
        <begin position="218"/>
        <end position="221"/>
    </location>
</feature>
<feature type="transmembrane region" description="Helical" evidence="1">
    <location>
        <begin position="222"/>
        <end position="242"/>
    </location>
</feature>
<feature type="topological domain" description="Cytoplasmic" evidence="5">
    <location>
        <begin position="243"/>
        <end position="257"/>
    </location>
</feature>
<feature type="transmembrane region" description="Helical" evidence="1">
    <location>
        <begin position="258"/>
        <end position="278"/>
    </location>
</feature>
<feature type="topological domain" description="Periplasmic" evidence="5">
    <location>
        <begin position="279"/>
        <end position="292"/>
    </location>
</feature>
<feature type="transmembrane region" description="Helical" evidence="1">
    <location>
        <begin position="293"/>
        <end position="313"/>
    </location>
</feature>
<feature type="topological domain" description="Cytoplasmic" evidence="2">
    <location>
        <begin position="314"/>
        <end position="344"/>
    </location>
</feature>
<feature type="helix" evidence="8">
    <location>
        <begin position="8"/>
        <end position="29"/>
    </location>
</feature>
<feature type="helix" evidence="8">
    <location>
        <begin position="31"/>
        <end position="56"/>
    </location>
</feature>
<feature type="helix" evidence="8">
    <location>
        <begin position="61"/>
        <end position="93"/>
    </location>
</feature>
<feature type="helix" evidence="8">
    <location>
        <begin position="95"/>
        <end position="108"/>
    </location>
</feature>
<feature type="helix" evidence="8">
    <location>
        <begin position="119"/>
        <end position="128"/>
    </location>
</feature>
<feature type="helix" evidence="8">
    <location>
        <begin position="130"/>
        <end position="146"/>
    </location>
</feature>
<feature type="helix" evidence="8">
    <location>
        <begin position="148"/>
        <end position="164"/>
    </location>
</feature>
<feature type="helix" evidence="8">
    <location>
        <begin position="165"/>
        <end position="167"/>
    </location>
</feature>
<feature type="helix" evidence="8">
    <location>
        <begin position="168"/>
        <end position="173"/>
    </location>
</feature>
<feature type="helix" evidence="8">
    <location>
        <begin position="178"/>
        <end position="183"/>
    </location>
</feature>
<feature type="strand" evidence="8">
    <location>
        <begin position="184"/>
        <end position="187"/>
    </location>
</feature>
<feature type="helix" evidence="8">
    <location>
        <begin position="191"/>
        <end position="217"/>
    </location>
</feature>
<feature type="helix" evidence="8">
    <location>
        <begin position="223"/>
        <end position="233"/>
    </location>
</feature>
<feature type="helix" evidence="8">
    <location>
        <begin position="239"/>
        <end position="244"/>
    </location>
</feature>
<feature type="helix" evidence="8">
    <location>
        <begin position="246"/>
        <end position="255"/>
    </location>
</feature>
<feature type="helix" evidence="8">
    <location>
        <begin position="259"/>
        <end position="274"/>
    </location>
</feature>
<feature type="helix" evidence="8">
    <location>
        <begin position="279"/>
        <end position="282"/>
    </location>
</feature>
<feature type="helix" evidence="8">
    <location>
        <begin position="292"/>
        <end position="305"/>
    </location>
</feature>
<feature type="helix" evidence="8">
    <location>
        <begin position="308"/>
        <end position="327"/>
    </location>
</feature>
<feature type="turn" evidence="8">
    <location>
        <begin position="329"/>
        <end position="331"/>
    </location>
</feature>
<feature type="helix" evidence="8">
    <location>
        <begin position="332"/>
        <end position="338"/>
    </location>
</feature>
<name>TQSA_ECOLI</name>
<keyword id="KW-0002">3D-structure</keyword>
<keyword id="KW-0997">Cell inner membrane</keyword>
<keyword id="KW-1003">Cell membrane</keyword>
<keyword id="KW-0472">Membrane</keyword>
<keyword id="KW-0673">Quorum sensing</keyword>
<keyword id="KW-1185">Reference proteome</keyword>
<keyword id="KW-0812">Transmembrane</keyword>
<keyword id="KW-1133">Transmembrane helix</keyword>
<keyword id="KW-0813">Transport</keyword>
<sequence length="344" mass="37543">MAKPIITLNGLKIVIMLGMLVIILCGIRFAAEIIVPFILALFIAVILNPLVQHMVRWRVPRVLAVSILMTIIVMAMVLLLAYLGSALNELTRTLPQYRNSIMTPLQALEPLLQRVGIDVSVDQLAHYIDPNAAMTLLTNLLTQLSNAMSSIFLLLLTVLFMLLEVPQLPGKFQQMMARPVEGMAAIQRAIDSVSHYLVLKTAISIITGLVAWAMLAALDVRFAFVWGLLAFALNYIPNIGSVLAAIPPIAQVLVFNGFYEALLVLAGYLLINLVFGNILEPRIMGRGLGLSTLVVFLSLIFWGWLLGPVGMLLSVPLTIIVKIALEQTAGGQSIAVLLSDLNKE</sequence>